<name>Y2236_CERS4</name>
<evidence type="ECO:0000255" key="1">
    <source>
        <dbReference type="HAMAP-Rule" id="MF_00678"/>
    </source>
</evidence>
<reference key="1">
    <citation type="submission" date="2005-09" db="EMBL/GenBank/DDBJ databases">
        <title>Complete sequence of chromosome 1 of Rhodobacter sphaeroides 2.4.1.</title>
        <authorList>
            <person name="Copeland A."/>
            <person name="Lucas S."/>
            <person name="Lapidus A."/>
            <person name="Barry K."/>
            <person name="Detter J.C."/>
            <person name="Glavina T."/>
            <person name="Hammon N."/>
            <person name="Israni S."/>
            <person name="Pitluck S."/>
            <person name="Richardson P."/>
            <person name="Mackenzie C."/>
            <person name="Choudhary M."/>
            <person name="Larimer F."/>
            <person name="Hauser L.J."/>
            <person name="Land M."/>
            <person name="Donohue T.J."/>
            <person name="Kaplan S."/>
        </authorList>
    </citation>
    <scope>NUCLEOTIDE SEQUENCE [LARGE SCALE GENOMIC DNA]</scope>
    <source>
        <strain>ATCC 17023 / DSM 158 / JCM 6121 / CCUG 31486 / LMG 2827 / NBRC 12203 / NCIMB 8253 / ATH 2.4.1.</strain>
    </source>
</reference>
<comment type="similarity">
    <text evidence="1">Belongs to the UPF0262 family.</text>
</comment>
<sequence length="158" mass="18117">MNRICHIEIDQTSPIPPTAEIEQERQVAIFDLLEENSFALPAREGRAPAEGPFRLTLAIREGRLVFDIRSEEEETVGEFHLSLGPFRQVVKDYFQICESYFEAVKRLPPSQIEAIDMARRGIHNEGARVLKERLEGKAEVDIDTARRLFTLICVLHWG</sequence>
<organism>
    <name type="scientific">Cereibacter sphaeroides (strain ATCC 17023 / DSM 158 / JCM 6121 / CCUG 31486 / LMG 2827 / NBRC 12203 / NCIMB 8253 / ATH 2.4.1.)</name>
    <name type="common">Rhodobacter sphaeroides</name>
    <dbReference type="NCBI Taxonomy" id="272943"/>
    <lineage>
        <taxon>Bacteria</taxon>
        <taxon>Pseudomonadati</taxon>
        <taxon>Pseudomonadota</taxon>
        <taxon>Alphaproteobacteria</taxon>
        <taxon>Rhodobacterales</taxon>
        <taxon>Paracoccaceae</taxon>
        <taxon>Cereibacter</taxon>
    </lineage>
</organism>
<dbReference type="EMBL" id="CP000143">
    <property type="protein sequence ID" value="ABA79804.1"/>
    <property type="molecule type" value="Genomic_DNA"/>
</dbReference>
<dbReference type="RefSeq" id="WP_011338372.1">
    <property type="nucleotide sequence ID" value="NC_007493.2"/>
</dbReference>
<dbReference type="RefSeq" id="YP_353705.1">
    <property type="nucleotide sequence ID" value="NC_007493.2"/>
</dbReference>
<dbReference type="SMR" id="Q3J080"/>
<dbReference type="STRING" id="272943.RSP_0631"/>
<dbReference type="EnsemblBacteria" id="ABA79804">
    <property type="protein sequence ID" value="ABA79804"/>
    <property type="gene ID" value="RSP_0631"/>
</dbReference>
<dbReference type="GeneID" id="3718259"/>
<dbReference type="KEGG" id="rsp:RSP_0631"/>
<dbReference type="PATRIC" id="fig|272943.9.peg.2578"/>
<dbReference type="eggNOG" id="COG5328">
    <property type="taxonomic scope" value="Bacteria"/>
</dbReference>
<dbReference type="OrthoDB" id="9798434at2"/>
<dbReference type="PhylomeDB" id="Q3J080"/>
<dbReference type="Proteomes" id="UP000002703">
    <property type="component" value="Chromosome 1"/>
</dbReference>
<dbReference type="HAMAP" id="MF_00678">
    <property type="entry name" value="UPF0262"/>
    <property type="match status" value="1"/>
</dbReference>
<dbReference type="InterPro" id="IPR008321">
    <property type="entry name" value="UCP032146"/>
</dbReference>
<dbReference type="NCBIfam" id="NF002769">
    <property type="entry name" value="PRK02853.1"/>
    <property type="match status" value="1"/>
</dbReference>
<dbReference type="Pfam" id="PF06793">
    <property type="entry name" value="UPF0262"/>
    <property type="match status" value="1"/>
</dbReference>
<dbReference type="PIRSF" id="PIRSF032146">
    <property type="entry name" value="UCP032146"/>
    <property type="match status" value="1"/>
</dbReference>
<protein>
    <recommendedName>
        <fullName evidence="1">UPF0262 protein RHOS4_22360</fullName>
    </recommendedName>
</protein>
<proteinExistence type="inferred from homology"/>
<gene>
    <name type="ordered locus">RHOS4_22360</name>
    <name type="ORF">RSP_0631</name>
</gene>
<keyword id="KW-1185">Reference proteome</keyword>
<accession>Q3J080</accession>
<feature type="chain" id="PRO_0000314207" description="UPF0262 protein RHOS4_22360">
    <location>
        <begin position="1"/>
        <end position="158"/>
    </location>
</feature>